<comment type="function">
    <text evidence="1">Metallothioneins have a high content of cysteine residues that bind various heavy metals. Acts as a reactive oxygen species (ROS) scavenger in the cytosol. Possesses superoxide anion and hydroxyl radical scavenging activities in vitro. Plays a role during root development, lateral root initiation and seed embryo germination, possibly by regulating levels of cytokinin.</text>
</comment>
<comment type="subcellular location">
    <subcellularLocation>
        <location evidence="1">Cytoplasm</location>
        <location evidence="1">Cytosol</location>
    </subcellularLocation>
</comment>
<comment type="similarity">
    <text evidence="2">Belongs to the metallothionein superfamily. Type 15 family.</text>
</comment>
<protein>
    <recommendedName>
        <fullName>Metallothionein-like protein 2C</fullName>
    </recommendedName>
    <alternativeName>
        <fullName>Class I metallothionein-like protein 2C</fullName>
    </alternativeName>
    <alternativeName>
        <fullName>OsMT-I-2c</fullName>
    </alternativeName>
    <alternativeName>
        <fullName>OsMT2b</fullName>
    </alternativeName>
</protein>
<name>MT2C_ORYSI</name>
<accession>A2XZL0</accession>
<accession>A5JVN2</accession>
<accession>P93433</accession>
<accession>Q0DLB2</accession>
<accession>Q65XV5</accession>
<gene>
    <name type="primary">MT2C</name>
    <name type="synonym">MT2BL</name>
    <name type="ORF">OsI_017503</name>
</gene>
<evidence type="ECO:0000250" key="1">
    <source>
        <dbReference type="UniProtKB" id="A3AZ88"/>
    </source>
</evidence>
<evidence type="ECO:0000305" key="2"/>
<organism>
    <name type="scientific">Oryza sativa subsp. indica</name>
    <name type="common">Rice</name>
    <dbReference type="NCBI Taxonomy" id="39946"/>
    <lineage>
        <taxon>Eukaryota</taxon>
        <taxon>Viridiplantae</taxon>
        <taxon>Streptophyta</taxon>
        <taxon>Embryophyta</taxon>
        <taxon>Tracheophyta</taxon>
        <taxon>Spermatophyta</taxon>
        <taxon>Magnoliopsida</taxon>
        <taxon>Liliopsida</taxon>
        <taxon>Poales</taxon>
        <taxon>Poaceae</taxon>
        <taxon>BOP clade</taxon>
        <taxon>Oryzoideae</taxon>
        <taxon>Oryzeae</taxon>
        <taxon>Oryzinae</taxon>
        <taxon>Oryza</taxon>
        <taxon>Oryza sativa</taxon>
    </lineage>
</organism>
<proteinExistence type="inferred from homology"/>
<feature type="chain" id="PRO_0000296354" description="Metallothionein-like protein 2C">
    <location>
        <begin position="1"/>
        <end position="84"/>
    </location>
</feature>
<feature type="sequence conflict" description="In Ref. 2; ABQ57494." evidence="2" ref="2">
    <original>G</original>
    <variation>S</variation>
    <location>
        <position position="21"/>
    </location>
</feature>
<keyword id="KW-0963">Cytoplasm</keyword>
<keyword id="KW-0479">Metal-binding</keyword>
<keyword id="KW-0480">Metal-thiolate cluster</keyword>
<keyword id="KW-1185">Reference proteome</keyword>
<keyword id="KW-0346">Stress response</keyword>
<dbReference type="EMBL" id="U77294">
    <property type="protein sequence ID" value="AAB18814.1"/>
    <property type="molecule type" value="mRNA"/>
</dbReference>
<dbReference type="EMBL" id="Y08529">
    <property type="protein sequence ID" value="CAA69845.1"/>
    <property type="molecule type" value="mRNA"/>
</dbReference>
<dbReference type="EMBL" id="EF584509">
    <property type="protein sequence ID" value="ABQ57494.1"/>
    <property type="molecule type" value="mRNA"/>
</dbReference>
<dbReference type="EMBL" id="CM000130">
    <property type="protein sequence ID" value="EAY96270.1"/>
    <property type="molecule type" value="Genomic_DNA"/>
</dbReference>
<dbReference type="PIR" id="T03787">
    <property type="entry name" value="T03787"/>
</dbReference>
<dbReference type="EnsemblPlants" id="BGIOSGA019039-TA">
    <property type="protein sequence ID" value="BGIOSGA019039-PA"/>
    <property type="gene ID" value="BGIOSGA019039"/>
</dbReference>
<dbReference type="EnsemblPlants" id="OsGoSa_05g0000860.01">
    <property type="protein sequence ID" value="OsGoSa_05g0000860.01"/>
    <property type="gene ID" value="OsGoSa_05g0000860"/>
</dbReference>
<dbReference type="EnsemblPlants" id="OsIR64_05g0000850.01">
    <property type="protein sequence ID" value="OsIR64_05g0000850.01"/>
    <property type="gene ID" value="OsIR64_05g0000850"/>
</dbReference>
<dbReference type="EnsemblPlants" id="OsKYG_05g0000800.01">
    <property type="protein sequence ID" value="OsKYG_05g0000800.01"/>
    <property type="gene ID" value="OsKYG_05g0000800"/>
</dbReference>
<dbReference type="EnsemblPlants" id="OsLaMu_05g0000860.01">
    <property type="protein sequence ID" value="OsLaMu_05g0000860.01"/>
    <property type="gene ID" value="OsLaMu_05g0000860"/>
</dbReference>
<dbReference type="EnsemblPlants" id="OsLima_05g0000870.01">
    <property type="protein sequence ID" value="OsLima_05g0000870.01"/>
    <property type="gene ID" value="OsLima_05g0000870"/>
</dbReference>
<dbReference type="EnsemblPlants" id="OsLiXu_05g0000850.01">
    <property type="protein sequence ID" value="OsLiXu_05g0000850.01"/>
    <property type="gene ID" value="OsLiXu_05g0000850"/>
</dbReference>
<dbReference type="EnsemblPlants" id="OsMH63_05G000830_01">
    <property type="protein sequence ID" value="OsMH63_05G000830_01"/>
    <property type="gene ID" value="OsMH63_05G000830"/>
</dbReference>
<dbReference type="EnsemblPlants" id="OsPr106_05g0000830.01">
    <property type="protein sequence ID" value="OsPr106_05g0000830.01"/>
    <property type="gene ID" value="OsPr106_05g0000830"/>
</dbReference>
<dbReference type="EnsemblPlants" id="OsZS97_05G000810_01">
    <property type="protein sequence ID" value="OsZS97_05G000810_01"/>
    <property type="gene ID" value="OsZS97_05G000810"/>
</dbReference>
<dbReference type="Gramene" id="BGIOSGA019039-TA">
    <property type="protein sequence ID" value="BGIOSGA019039-PA"/>
    <property type="gene ID" value="BGIOSGA019039"/>
</dbReference>
<dbReference type="Gramene" id="OsGoSa_05g0000860.01">
    <property type="protein sequence ID" value="OsGoSa_05g0000860.01"/>
    <property type="gene ID" value="OsGoSa_05g0000860"/>
</dbReference>
<dbReference type="Gramene" id="OsIR64_05g0000850.01">
    <property type="protein sequence ID" value="OsIR64_05g0000850.01"/>
    <property type="gene ID" value="OsIR64_05g0000850"/>
</dbReference>
<dbReference type="Gramene" id="OsKYG_05g0000800.01">
    <property type="protein sequence ID" value="OsKYG_05g0000800.01"/>
    <property type="gene ID" value="OsKYG_05g0000800"/>
</dbReference>
<dbReference type="Gramene" id="OsLaMu_05g0000860.01">
    <property type="protein sequence ID" value="OsLaMu_05g0000860.01"/>
    <property type="gene ID" value="OsLaMu_05g0000860"/>
</dbReference>
<dbReference type="Gramene" id="OsLima_05g0000870.01">
    <property type="protein sequence ID" value="OsLima_05g0000870.01"/>
    <property type="gene ID" value="OsLima_05g0000870"/>
</dbReference>
<dbReference type="Gramene" id="OsLiXu_05g0000850.01">
    <property type="protein sequence ID" value="OsLiXu_05g0000850.01"/>
    <property type="gene ID" value="OsLiXu_05g0000850"/>
</dbReference>
<dbReference type="Gramene" id="OsMH63_05G000830_01">
    <property type="protein sequence ID" value="OsMH63_05G000830_01"/>
    <property type="gene ID" value="OsMH63_05G000830"/>
</dbReference>
<dbReference type="Gramene" id="OsPr106_05g0000830.01">
    <property type="protein sequence ID" value="OsPr106_05g0000830.01"/>
    <property type="gene ID" value="OsPr106_05g0000830"/>
</dbReference>
<dbReference type="Gramene" id="OsZS97_05G000810_01">
    <property type="protein sequence ID" value="OsZS97_05G000810_01"/>
    <property type="gene ID" value="OsZS97_05G000810"/>
</dbReference>
<dbReference type="HOGENOM" id="CLU_161105_1_0_1"/>
<dbReference type="OMA" id="ISMSCCN"/>
<dbReference type="OrthoDB" id="693663at2759"/>
<dbReference type="Proteomes" id="UP000007015">
    <property type="component" value="Chromosome 5"/>
</dbReference>
<dbReference type="GO" id="GO:0005829">
    <property type="term" value="C:cytosol"/>
    <property type="evidence" value="ECO:0007669"/>
    <property type="project" value="UniProtKB-SubCell"/>
</dbReference>
<dbReference type="GO" id="GO:0046872">
    <property type="term" value="F:metal ion binding"/>
    <property type="evidence" value="ECO:0007669"/>
    <property type="project" value="UniProtKB-KW"/>
</dbReference>
<dbReference type="GO" id="GO:0072593">
    <property type="term" value="P:reactive oxygen species metabolic process"/>
    <property type="evidence" value="ECO:0007669"/>
    <property type="project" value="EnsemblPlants"/>
</dbReference>
<dbReference type="InterPro" id="IPR000347">
    <property type="entry name" value="Metalthion_15p"/>
</dbReference>
<dbReference type="PANTHER" id="PTHR33543">
    <property type="entry name" value="METALLOTHIONEIN-LIKE PROTEIN 2A"/>
    <property type="match status" value="1"/>
</dbReference>
<dbReference type="PANTHER" id="PTHR33543:SF18">
    <property type="entry name" value="METALLOTHIONEIN-LIKE PROTEIN 2C"/>
    <property type="match status" value="1"/>
</dbReference>
<dbReference type="Pfam" id="PF01439">
    <property type="entry name" value="Metallothio_2"/>
    <property type="match status" value="1"/>
</dbReference>
<sequence>MSCCGGNCGCGSGCQCGGGCGGCKMFPDVEATATTKTFVLAAPSNKASSGGMEMAVESGENGGCGCNTCKCGTSCSGCSCCSCN</sequence>
<reference key="1">
    <citation type="submission" date="1996-12" db="EMBL/GenBank/DDBJ databases">
        <title>Molecular cloning and characterization of a metallothionein-like protein gene in rice.</title>
        <authorList>
            <person name="Lee M.C."/>
            <person name="Park J.Y."/>
            <person name="Lee J.S."/>
            <person name="Eun M.Y."/>
        </authorList>
    </citation>
    <scope>NUCLEOTIDE SEQUENCE [MRNA]</scope>
    <source>
        <strain>cv. Milyang 23</strain>
    </source>
</reference>
<reference key="2">
    <citation type="journal article" date="2008" name="Plant Physiol.">
        <title>Characteristic and expression analysis of a metallothionein gene, OsMT2b, down-regulated by cytokinin suggests functions in root development and seed embryo germination of rice.</title>
        <authorList>
            <person name="Yuan J."/>
            <person name="Chen D."/>
            <person name="Ren Y."/>
            <person name="Zhang X."/>
            <person name="Zhao J."/>
        </authorList>
    </citation>
    <scope>NUCLEOTIDE SEQUENCE [MRNA]</scope>
    <source>
        <strain>cv. Jiayu 948</strain>
    </source>
</reference>
<reference key="3">
    <citation type="journal article" date="2005" name="PLoS Biol.">
        <title>The genomes of Oryza sativa: a history of duplications.</title>
        <authorList>
            <person name="Yu J."/>
            <person name="Wang J."/>
            <person name="Lin W."/>
            <person name="Li S."/>
            <person name="Li H."/>
            <person name="Zhou J."/>
            <person name="Ni P."/>
            <person name="Dong W."/>
            <person name="Hu S."/>
            <person name="Zeng C."/>
            <person name="Zhang J."/>
            <person name="Zhang Y."/>
            <person name="Li R."/>
            <person name="Xu Z."/>
            <person name="Li S."/>
            <person name="Li X."/>
            <person name="Zheng H."/>
            <person name="Cong L."/>
            <person name="Lin L."/>
            <person name="Yin J."/>
            <person name="Geng J."/>
            <person name="Li G."/>
            <person name="Shi J."/>
            <person name="Liu J."/>
            <person name="Lv H."/>
            <person name="Li J."/>
            <person name="Wang J."/>
            <person name="Deng Y."/>
            <person name="Ran L."/>
            <person name="Shi X."/>
            <person name="Wang X."/>
            <person name="Wu Q."/>
            <person name="Li C."/>
            <person name="Ren X."/>
            <person name="Wang J."/>
            <person name="Wang X."/>
            <person name="Li D."/>
            <person name="Liu D."/>
            <person name="Zhang X."/>
            <person name="Ji Z."/>
            <person name="Zhao W."/>
            <person name="Sun Y."/>
            <person name="Zhang Z."/>
            <person name="Bao J."/>
            <person name="Han Y."/>
            <person name="Dong L."/>
            <person name="Ji J."/>
            <person name="Chen P."/>
            <person name="Wu S."/>
            <person name="Liu J."/>
            <person name="Xiao Y."/>
            <person name="Bu D."/>
            <person name="Tan J."/>
            <person name="Yang L."/>
            <person name="Ye C."/>
            <person name="Zhang J."/>
            <person name="Xu J."/>
            <person name="Zhou Y."/>
            <person name="Yu Y."/>
            <person name="Zhang B."/>
            <person name="Zhuang S."/>
            <person name="Wei H."/>
            <person name="Liu B."/>
            <person name="Lei M."/>
            <person name="Yu H."/>
            <person name="Li Y."/>
            <person name="Xu H."/>
            <person name="Wei S."/>
            <person name="He X."/>
            <person name="Fang L."/>
            <person name="Zhang Z."/>
            <person name="Zhang Y."/>
            <person name="Huang X."/>
            <person name="Su Z."/>
            <person name="Tong W."/>
            <person name="Li J."/>
            <person name="Tong Z."/>
            <person name="Li S."/>
            <person name="Ye J."/>
            <person name="Wang L."/>
            <person name="Fang L."/>
            <person name="Lei T."/>
            <person name="Chen C.-S."/>
            <person name="Chen H.-C."/>
            <person name="Xu Z."/>
            <person name="Li H."/>
            <person name="Huang H."/>
            <person name="Zhang F."/>
            <person name="Xu H."/>
            <person name="Li N."/>
            <person name="Zhao C."/>
            <person name="Li S."/>
            <person name="Dong L."/>
            <person name="Huang Y."/>
            <person name="Li L."/>
            <person name="Xi Y."/>
            <person name="Qi Q."/>
            <person name="Li W."/>
            <person name="Zhang B."/>
            <person name="Hu W."/>
            <person name="Zhang Y."/>
            <person name="Tian X."/>
            <person name="Jiao Y."/>
            <person name="Liang X."/>
            <person name="Jin J."/>
            <person name="Gao L."/>
            <person name="Zheng W."/>
            <person name="Hao B."/>
            <person name="Liu S.-M."/>
            <person name="Wang W."/>
            <person name="Yuan L."/>
            <person name="Cao M."/>
            <person name="McDermott J."/>
            <person name="Samudrala R."/>
            <person name="Wang J."/>
            <person name="Wong G.K.-S."/>
            <person name="Yang H."/>
        </authorList>
    </citation>
    <scope>NUCLEOTIDE SEQUENCE [LARGE SCALE GENOMIC DNA]</scope>
    <source>
        <strain>cv. 93-11</strain>
    </source>
</reference>
<reference key="4">
    <citation type="journal article" date="2006" name="J. Biochem. Mol. Biol.">
        <title>Molecular analyses of the metallothionein gene family in rice (Oryza sativa L.).</title>
        <authorList>
            <person name="Zhou G."/>
            <person name="Xu Y."/>
            <person name="Li J."/>
            <person name="Yang L."/>
            <person name="Liu J.-Y."/>
        </authorList>
    </citation>
    <scope>GENE FAMILY</scope>
</reference>